<gene>
    <name evidence="4" type="primary">pycC</name>
    <name evidence="5" type="ORF">ET996_01260</name>
</gene>
<comment type="function">
    <text evidence="7">Pycsar (pyrimidine cyclase system for antiphage resistance) provides immunity against bacteriophage. The pyrimidine cyclase (PycC) synthesizes cyclic nucleotides in response to infection; these serve as specific second messenger signals. The signals activate the adjacent effector, leading to bacterial cell death and abortive phage infection. A clade D Pycsar system.</text>
</comment>
<comment type="function">
    <text evidence="3 7">The pyrimidine cyclase gene of a two-gene Pycsar system, generates cyclic UMP (cUMP) from UTP as well as cGMP from GTP to a lesser extent, has little to no activity on ATP or CTP (PubMed:34644530). Expression of this and adjacent effector PtPycTM (AC A0A4Q9KQH5) probably confers resistance to bacteriophage. The genes are probably only expressed in response to bacteriophage infection (Probable).</text>
</comment>
<comment type="catalytic activity">
    <reaction evidence="3">
        <text>GTP = 3',5'-cyclic GMP + diphosphate</text>
        <dbReference type="Rhea" id="RHEA:13665"/>
        <dbReference type="ChEBI" id="CHEBI:33019"/>
        <dbReference type="ChEBI" id="CHEBI:37565"/>
        <dbReference type="ChEBI" id="CHEBI:57746"/>
        <dbReference type="EC" id="4.6.1.2"/>
    </reaction>
</comment>
<comment type="catalytic activity">
    <reaction evidence="3">
        <text>UTP = 3',5'-cyclic UMP + diphosphate</text>
        <dbReference type="Rhea" id="RHEA:69603"/>
        <dbReference type="ChEBI" id="CHEBI:33019"/>
        <dbReference type="ChEBI" id="CHEBI:46398"/>
        <dbReference type="ChEBI" id="CHEBI:184387"/>
        <dbReference type="EC" id="4.6.1.26"/>
    </reaction>
</comment>
<comment type="cofactor">
    <cofactor evidence="2">
        <name>Mn(2+)</name>
        <dbReference type="ChEBI" id="CHEBI:29035"/>
    </cofactor>
</comment>
<comment type="subunit">
    <text evidence="1">Homodimer.</text>
</comment>
<comment type="subcellular location">
    <subcellularLocation>
        <location evidence="6">Cytoplasm</location>
    </subcellularLocation>
</comment>
<comment type="similarity">
    <text evidence="7">Belongs to the adenylyl cyclase class-4/guanylyl cyclase family. Pyrimidine cyclase subfamily.</text>
</comment>
<evidence type="ECO:0000250" key="1">
    <source>
        <dbReference type="UniProtKB" id="A0A0J5ZXG5"/>
    </source>
</evidence>
<evidence type="ECO:0000250" key="2">
    <source>
        <dbReference type="UniProtKB" id="P0DV24"/>
    </source>
</evidence>
<evidence type="ECO:0000269" key="3">
    <source>
    </source>
</evidence>
<evidence type="ECO:0000303" key="4">
    <source>
    </source>
</evidence>
<evidence type="ECO:0000303" key="5">
    <source ref="1"/>
</evidence>
<evidence type="ECO:0000305" key="6"/>
<evidence type="ECO:0000305" key="7">
    <source>
    </source>
</evidence>
<reference key="1">
    <citation type="submission" date="2019-01" db="EMBL/GenBank/DDBJ databases">
        <title>Lactibacter flavus gen. nov., sp. nov., a novel bacterium of the family Propionibacteriaceae isolated from raw milk and dairy products.</title>
        <authorList>
            <person name="Huptas C."/>
            <person name="Wenning M."/>
            <person name="Breitenwieser F."/>
            <person name="Doll E."/>
            <person name="Von Neubeck M."/>
            <person name="Busse H.-J."/>
            <person name="Scherer S."/>
        </authorList>
    </citation>
    <scope>NUCLEOTIDE SEQUENCE [LARGE SCALE GENOMIC DNA]</scope>
    <source>
        <strain>DSM 22130 / JCM 15804 / WR061</strain>
    </source>
</reference>
<reference key="2">
    <citation type="journal article" date="2021" name="Cell">
        <title>Cyclic CMP and cyclic UMP mediate bacterial immunity against phages.</title>
        <authorList>
            <person name="Tal N."/>
            <person name="Morehouse B.R."/>
            <person name="Millman A."/>
            <person name="Stokar-Avihail A."/>
            <person name="Avraham C."/>
            <person name="Fedorenko T."/>
            <person name="Yirmiya E."/>
            <person name="Herbst E."/>
            <person name="Brandis A."/>
            <person name="Mehlman T."/>
            <person name="Oppenheimer-Shaanan Y."/>
            <person name="Keszei A.F.A."/>
            <person name="Shao S."/>
            <person name="Amitai G."/>
            <person name="Kranzusch P.J."/>
            <person name="Sorek R."/>
        </authorList>
    </citation>
    <scope>FUNCTION</scope>
    <scope>CATALYTIC ACTIVITY</scope>
    <scope>CLASSIFICATION</scope>
    <source>
        <strain>DSM 22130 / JCM 15804 / WR061</strain>
    </source>
</reference>
<dbReference type="EC" id="4.6.1.2" evidence="3"/>
<dbReference type="EC" id="4.6.1.26" evidence="3"/>
<dbReference type="EMBL" id="SDMR01000001">
    <property type="protein sequence ID" value="TBT96321.1"/>
    <property type="molecule type" value="Genomic_DNA"/>
</dbReference>
<dbReference type="RefSeq" id="WP_131170733.1">
    <property type="nucleotide sequence ID" value="NZ_FXTL01000001.1"/>
</dbReference>
<dbReference type="SMR" id="A0A4V2JTK3"/>
<dbReference type="OrthoDB" id="4162550at2"/>
<dbReference type="Proteomes" id="UP000291933">
    <property type="component" value="Unassembled WGS sequence"/>
</dbReference>
<dbReference type="GO" id="GO:0005737">
    <property type="term" value="C:cytoplasm"/>
    <property type="evidence" value="ECO:0007669"/>
    <property type="project" value="UniProtKB-SubCell"/>
</dbReference>
<dbReference type="GO" id="GO:0016829">
    <property type="term" value="F:lyase activity"/>
    <property type="evidence" value="ECO:0007669"/>
    <property type="project" value="UniProtKB-KW"/>
</dbReference>
<dbReference type="GO" id="GO:0046872">
    <property type="term" value="F:metal ion binding"/>
    <property type="evidence" value="ECO:0007669"/>
    <property type="project" value="UniProtKB-KW"/>
</dbReference>
<dbReference type="GO" id="GO:0000166">
    <property type="term" value="F:nucleotide binding"/>
    <property type="evidence" value="ECO:0007669"/>
    <property type="project" value="UniProtKB-KW"/>
</dbReference>
<dbReference type="GO" id="GO:0051607">
    <property type="term" value="P:defense response to virus"/>
    <property type="evidence" value="ECO:0007669"/>
    <property type="project" value="UniProtKB-KW"/>
</dbReference>
<dbReference type="Gene3D" id="3.30.70.1230">
    <property type="entry name" value="Nucleotide cyclase"/>
    <property type="match status" value="1"/>
</dbReference>
<dbReference type="InterPro" id="IPR029787">
    <property type="entry name" value="Nucleotide_cyclase"/>
</dbReference>
<dbReference type="SUPFAM" id="SSF55073">
    <property type="entry name" value="Nucleotide cyclase"/>
    <property type="match status" value="1"/>
</dbReference>
<sequence>MSDEDLFLTALLDSLGKEVNTVLNNSPIKVEEKDGDFKAEDIPSPSSDTWVKLPEVVAVVCDLKGSTHLGTGKHDTSTARIYKSGVEGAVRVFHEFGANFIDIQGDGGFGLFWGERAHERALCAGVTIRTFSEEFVERLEKRWPEGLPETGYKVGIHAARTLVKRIGTKREISEQEAVWAGRPVNYAAKCAQSADRHQVIITQAVWDKMKDNDFIAFSCDCGDGPTANLWTDVTVDRLPEEDRDAVVLNSPWCKTCGPAFCEAIMAGEKKRDIPSAVRTGINRMKMQKALEAKRLRDSSRNSALRGVR</sequence>
<accession>A0A4V2JTK3</accession>
<proteinExistence type="evidence at protein level"/>
<organism>
    <name type="scientific">Propioniciclava tarda</name>
    <dbReference type="NCBI Taxonomy" id="433330"/>
    <lineage>
        <taxon>Bacteria</taxon>
        <taxon>Bacillati</taxon>
        <taxon>Actinomycetota</taxon>
        <taxon>Actinomycetes</taxon>
        <taxon>Propionibacteriales</taxon>
        <taxon>Propionibacteriaceae</taxon>
        <taxon>Propioniciclava</taxon>
    </lineage>
</organism>
<protein>
    <recommendedName>
        <fullName evidence="4">Uridylate cyclase</fullName>
        <ecNumber evidence="3">4.6.1.2</ecNumber>
        <ecNumber evidence="3">4.6.1.26</ecNumber>
    </recommendedName>
    <alternativeName>
        <fullName>Cyclic UMP synthase</fullName>
        <shortName evidence="4">cUMP synthase</shortName>
    </alternativeName>
    <alternativeName>
        <fullName evidence="4">PtPycC</fullName>
    </alternativeName>
</protein>
<keyword id="KW-0051">Antiviral defense</keyword>
<keyword id="KW-0963">Cytoplasm</keyword>
<keyword id="KW-0456">Lyase</keyword>
<keyword id="KW-0464">Manganese</keyword>
<keyword id="KW-0479">Metal-binding</keyword>
<keyword id="KW-0547">Nucleotide-binding</keyword>
<keyword id="KW-1185">Reference proteome</keyword>
<name>PYCC_PROTD</name>
<feature type="chain" id="PRO_0000455224" description="Uridylate cyclase">
    <location>
        <begin position="1"/>
        <end position="308"/>
    </location>
</feature>
<feature type="binding site" evidence="7">
    <location>
        <position position="62"/>
    </location>
    <ligand>
        <name>Mn(2+)</name>
        <dbReference type="ChEBI" id="CHEBI:29035"/>
        <label>1</label>
    </ligand>
</feature>
<feature type="binding site" evidence="7">
    <location>
        <position position="62"/>
    </location>
    <ligand>
        <name>Mn(2+)</name>
        <dbReference type="ChEBI" id="CHEBI:29035"/>
        <label>2</label>
    </ligand>
</feature>
<feature type="binding site" evidence="7">
    <location>
        <position position="106"/>
    </location>
    <ligand>
        <name>Mn(2+)</name>
        <dbReference type="ChEBI" id="CHEBI:29035"/>
        <label>1</label>
    </ligand>
</feature>
<feature type="binding site" evidence="7">
    <location>
        <position position="106"/>
    </location>
    <ligand>
        <name>Mn(2+)</name>
        <dbReference type="ChEBI" id="CHEBI:29035"/>
        <label>2</label>
    </ligand>
</feature>